<accession>A4IRQ7</accession>
<proteinExistence type="inferred from homology"/>
<reference key="1">
    <citation type="journal article" date="2007" name="Proc. Natl. Acad. Sci. U.S.A.">
        <title>Genome and proteome of long-chain alkane degrading Geobacillus thermodenitrificans NG80-2 isolated from a deep-subsurface oil reservoir.</title>
        <authorList>
            <person name="Feng L."/>
            <person name="Wang W."/>
            <person name="Cheng J."/>
            <person name="Ren Y."/>
            <person name="Zhao G."/>
            <person name="Gao C."/>
            <person name="Tang Y."/>
            <person name="Liu X."/>
            <person name="Han W."/>
            <person name="Peng X."/>
            <person name="Liu R."/>
            <person name="Wang L."/>
        </authorList>
    </citation>
    <scope>NUCLEOTIDE SEQUENCE [LARGE SCALE GENOMIC DNA]</scope>
    <source>
        <strain>NG80-2</strain>
    </source>
</reference>
<protein>
    <recommendedName>
        <fullName evidence="1">Acetyl-coenzyme A carboxylase carboxyl transferase subunit beta</fullName>
        <shortName evidence="1">ACCase subunit beta</shortName>
        <shortName evidence="1">Acetyl-CoA carboxylase carboxyltransferase subunit beta</shortName>
        <ecNumber evidence="1">2.1.3.15</ecNumber>
    </recommendedName>
</protein>
<dbReference type="EC" id="2.1.3.15" evidence="1"/>
<dbReference type="EMBL" id="CP000557">
    <property type="protein sequence ID" value="ABO68011.1"/>
    <property type="status" value="ALT_INIT"/>
    <property type="molecule type" value="Genomic_DNA"/>
</dbReference>
<dbReference type="RefSeq" id="WP_008880863.1">
    <property type="nucleotide sequence ID" value="NC_009328.1"/>
</dbReference>
<dbReference type="SMR" id="A4IRQ7"/>
<dbReference type="GeneID" id="87623190"/>
<dbReference type="KEGG" id="gtn:GTNG_2666"/>
<dbReference type="eggNOG" id="COG0777">
    <property type="taxonomic scope" value="Bacteria"/>
</dbReference>
<dbReference type="HOGENOM" id="CLU_015486_1_1_9"/>
<dbReference type="UniPathway" id="UPA00655">
    <property type="reaction ID" value="UER00711"/>
</dbReference>
<dbReference type="Proteomes" id="UP000001578">
    <property type="component" value="Chromosome"/>
</dbReference>
<dbReference type="GO" id="GO:0009317">
    <property type="term" value="C:acetyl-CoA carboxylase complex"/>
    <property type="evidence" value="ECO:0007669"/>
    <property type="project" value="InterPro"/>
</dbReference>
<dbReference type="GO" id="GO:0003989">
    <property type="term" value="F:acetyl-CoA carboxylase activity"/>
    <property type="evidence" value="ECO:0007669"/>
    <property type="project" value="InterPro"/>
</dbReference>
<dbReference type="GO" id="GO:0005524">
    <property type="term" value="F:ATP binding"/>
    <property type="evidence" value="ECO:0007669"/>
    <property type="project" value="UniProtKB-KW"/>
</dbReference>
<dbReference type="GO" id="GO:0016743">
    <property type="term" value="F:carboxyl- or carbamoyltransferase activity"/>
    <property type="evidence" value="ECO:0007669"/>
    <property type="project" value="UniProtKB-UniRule"/>
</dbReference>
<dbReference type="GO" id="GO:0008270">
    <property type="term" value="F:zinc ion binding"/>
    <property type="evidence" value="ECO:0007669"/>
    <property type="project" value="UniProtKB-UniRule"/>
</dbReference>
<dbReference type="GO" id="GO:0006633">
    <property type="term" value="P:fatty acid biosynthetic process"/>
    <property type="evidence" value="ECO:0007669"/>
    <property type="project" value="UniProtKB-KW"/>
</dbReference>
<dbReference type="GO" id="GO:2001295">
    <property type="term" value="P:malonyl-CoA biosynthetic process"/>
    <property type="evidence" value="ECO:0007669"/>
    <property type="project" value="UniProtKB-UniRule"/>
</dbReference>
<dbReference type="Gene3D" id="3.90.226.10">
    <property type="entry name" value="2-enoyl-CoA Hydratase, Chain A, domain 1"/>
    <property type="match status" value="1"/>
</dbReference>
<dbReference type="HAMAP" id="MF_01395">
    <property type="entry name" value="AcetylCoA_CT_beta"/>
    <property type="match status" value="1"/>
</dbReference>
<dbReference type="InterPro" id="IPR034733">
    <property type="entry name" value="AcCoA_carboxyl_beta"/>
</dbReference>
<dbReference type="InterPro" id="IPR000438">
    <property type="entry name" value="Acetyl_CoA_COase_Trfase_b_su"/>
</dbReference>
<dbReference type="InterPro" id="IPR029045">
    <property type="entry name" value="ClpP/crotonase-like_dom_sf"/>
</dbReference>
<dbReference type="InterPro" id="IPR011762">
    <property type="entry name" value="COA_CT_N"/>
</dbReference>
<dbReference type="InterPro" id="IPR041010">
    <property type="entry name" value="Znf-ACC"/>
</dbReference>
<dbReference type="NCBIfam" id="TIGR00515">
    <property type="entry name" value="accD"/>
    <property type="match status" value="1"/>
</dbReference>
<dbReference type="PANTHER" id="PTHR42995">
    <property type="entry name" value="ACETYL-COENZYME A CARBOXYLASE CARBOXYL TRANSFERASE SUBUNIT BETA, CHLOROPLASTIC"/>
    <property type="match status" value="1"/>
</dbReference>
<dbReference type="PANTHER" id="PTHR42995:SF5">
    <property type="entry name" value="ACETYL-COENZYME A CARBOXYLASE CARBOXYL TRANSFERASE SUBUNIT BETA, CHLOROPLASTIC"/>
    <property type="match status" value="1"/>
</dbReference>
<dbReference type="Pfam" id="PF01039">
    <property type="entry name" value="Carboxyl_trans"/>
    <property type="match status" value="1"/>
</dbReference>
<dbReference type="Pfam" id="PF17848">
    <property type="entry name" value="Zn_ribbon_ACC"/>
    <property type="match status" value="1"/>
</dbReference>
<dbReference type="PRINTS" id="PR01070">
    <property type="entry name" value="ACCCTRFRASEB"/>
</dbReference>
<dbReference type="SUPFAM" id="SSF52096">
    <property type="entry name" value="ClpP/crotonase"/>
    <property type="match status" value="1"/>
</dbReference>
<dbReference type="PROSITE" id="PS50980">
    <property type="entry name" value="COA_CT_NTER"/>
    <property type="match status" value="1"/>
</dbReference>
<sequence>MWKDLFVKKKKYAAIPSEPLRPEVPEGVMTKCPQCKKIMYTKELVKNLRVCLSCGYHHPMPARERIESVLDEGSFREYDAGMTSVNPLGFPGYIEKLEADRRKSGLNEAVVTGEGTLEGHPLAIAVMDSSFRMGSMGSVVGEKIARAVERAHEQRMPFLIFTASGGARMQEGVLSLMQMAKTSAALKRFSNDGGLFISVMTHPTTGGVSASFASLGDYNFAEPGALIGFAGRRVIEQTVREELPEDFQTAEFLLKHGQLDAVIHRHELKEKLAVVLAIHAGGGESGWWRN</sequence>
<feature type="chain" id="PRO_0000389748" description="Acetyl-coenzyme A carboxylase carboxyl transferase subunit beta">
    <location>
        <begin position="1"/>
        <end position="290"/>
    </location>
</feature>
<feature type="domain" description="CoA carboxyltransferase N-terminal" evidence="2">
    <location>
        <begin position="28"/>
        <end position="290"/>
    </location>
</feature>
<feature type="zinc finger region" description="C4-type" evidence="1">
    <location>
        <begin position="32"/>
        <end position="54"/>
    </location>
</feature>
<feature type="binding site" evidence="1">
    <location>
        <position position="32"/>
    </location>
    <ligand>
        <name>Zn(2+)</name>
        <dbReference type="ChEBI" id="CHEBI:29105"/>
    </ligand>
</feature>
<feature type="binding site" evidence="1">
    <location>
        <position position="35"/>
    </location>
    <ligand>
        <name>Zn(2+)</name>
        <dbReference type="ChEBI" id="CHEBI:29105"/>
    </ligand>
</feature>
<feature type="binding site" evidence="1">
    <location>
        <position position="51"/>
    </location>
    <ligand>
        <name>Zn(2+)</name>
        <dbReference type="ChEBI" id="CHEBI:29105"/>
    </ligand>
</feature>
<feature type="binding site" evidence="1">
    <location>
        <position position="54"/>
    </location>
    <ligand>
        <name>Zn(2+)</name>
        <dbReference type="ChEBI" id="CHEBI:29105"/>
    </ligand>
</feature>
<organism>
    <name type="scientific">Geobacillus thermodenitrificans (strain NG80-2)</name>
    <dbReference type="NCBI Taxonomy" id="420246"/>
    <lineage>
        <taxon>Bacteria</taxon>
        <taxon>Bacillati</taxon>
        <taxon>Bacillota</taxon>
        <taxon>Bacilli</taxon>
        <taxon>Bacillales</taxon>
        <taxon>Anoxybacillaceae</taxon>
        <taxon>Geobacillus</taxon>
    </lineage>
</organism>
<keyword id="KW-0067">ATP-binding</keyword>
<keyword id="KW-0963">Cytoplasm</keyword>
<keyword id="KW-0275">Fatty acid biosynthesis</keyword>
<keyword id="KW-0276">Fatty acid metabolism</keyword>
<keyword id="KW-0444">Lipid biosynthesis</keyword>
<keyword id="KW-0443">Lipid metabolism</keyword>
<keyword id="KW-0479">Metal-binding</keyword>
<keyword id="KW-0547">Nucleotide-binding</keyword>
<keyword id="KW-0808">Transferase</keyword>
<keyword id="KW-0862">Zinc</keyword>
<keyword id="KW-0863">Zinc-finger</keyword>
<gene>
    <name evidence="1" type="primary">accD</name>
    <name type="ordered locus">GTNG_2666</name>
</gene>
<name>ACCD_GEOTN</name>
<comment type="function">
    <text evidence="1">Component of the acetyl coenzyme A carboxylase (ACC) complex. Biotin carboxylase (BC) catalyzes the carboxylation of biotin on its carrier protein (BCCP) and then the CO(2) group is transferred by the transcarboxylase to acetyl-CoA to form malonyl-CoA.</text>
</comment>
<comment type="catalytic activity">
    <reaction evidence="1">
        <text>N(6)-carboxybiotinyl-L-lysyl-[protein] + acetyl-CoA = N(6)-biotinyl-L-lysyl-[protein] + malonyl-CoA</text>
        <dbReference type="Rhea" id="RHEA:54728"/>
        <dbReference type="Rhea" id="RHEA-COMP:10505"/>
        <dbReference type="Rhea" id="RHEA-COMP:10506"/>
        <dbReference type="ChEBI" id="CHEBI:57288"/>
        <dbReference type="ChEBI" id="CHEBI:57384"/>
        <dbReference type="ChEBI" id="CHEBI:83144"/>
        <dbReference type="ChEBI" id="CHEBI:83145"/>
        <dbReference type="EC" id="2.1.3.15"/>
    </reaction>
</comment>
<comment type="cofactor">
    <cofactor evidence="1">
        <name>Zn(2+)</name>
        <dbReference type="ChEBI" id="CHEBI:29105"/>
    </cofactor>
    <text evidence="1">Binds 1 zinc ion per subunit.</text>
</comment>
<comment type="pathway">
    <text evidence="1">Lipid metabolism; malonyl-CoA biosynthesis; malonyl-CoA from acetyl-CoA: step 1/1.</text>
</comment>
<comment type="subunit">
    <text evidence="1">Acetyl-CoA carboxylase is a heterohexamer composed of biotin carboxyl carrier protein (AccB), biotin carboxylase (AccC) and two subunits each of ACCase subunit alpha (AccA) and ACCase subunit beta (AccD).</text>
</comment>
<comment type="subcellular location">
    <subcellularLocation>
        <location evidence="1">Cytoplasm</location>
    </subcellularLocation>
</comment>
<comment type="similarity">
    <text evidence="1">Belongs to the AccD/PCCB family.</text>
</comment>
<comment type="sequence caution" evidence="3">
    <conflict type="erroneous initiation">
        <sequence resource="EMBL-CDS" id="ABO68011"/>
    </conflict>
    <text>Truncated N-terminus.</text>
</comment>
<evidence type="ECO:0000255" key="1">
    <source>
        <dbReference type="HAMAP-Rule" id="MF_01395"/>
    </source>
</evidence>
<evidence type="ECO:0000255" key="2">
    <source>
        <dbReference type="PROSITE-ProRule" id="PRU01136"/>
    </source>
</evidence>
<evidence type="ECO:0000305" key="3"/>